<comment type="function">
    <text evidence="6">Component of the floral volatile benzenoid/phenylpropanoid (FVBP) biosynthetic pathway (PubMed:19292760). Catalyzes the oxidation of benzaldehyde to benzoic acid (BA) (PubMed:19292760). Capable of oxidizing a broad spectrum of aliphatic aldehydes; increased carbon chain length results in a decrease in its efficiency (PubMed:19292760).</text>
</comment>
<comment type="catalytic activity">
    <reaction evidence="6">
        <text>an aldehyde + NAD(+) + H2O = a carboxylate + NADH + 2 H(+)</text>
        <dbReference type="Rhea" id="RHEA:16185"/>
        <dbReference type="ChEBI" id="CHEBI:15377"/>
        <dbReference type="ChEBI" id="CHEBI:15378"/>
        <dbReference type="ChEBI" id="CHEBI:17478"/>
        <dbReference type="ChEBI" id="CHEBI:29067"/>
        <dbReference type="ChEBI" id="CHEBI:57540"/>
        <dbReference type="ChEBI" id="CHEBI:57945"/>
        <dbReference type="EC" id="1.2.1.3"/>
    </reaction>
    <physiologicalReaction direction="left-to-right" evidence="6">
        <dbReference type="Rhea" id="RHEA:16186"/>
    </physiologicalReaction>
</comment>
<comment type="catalytic activity">
    <reaction evidence="6">
        <text>acetaldehyde + NAD(+) + H2O = acetate + NADH + 2 H(+)</text>
        <dbReference type="Rhea" id="RHEA:25294"/>
        <dbReference type="ChEBI" id="CHEBI:15343"/>
        <dbReference type="ChEBI" id="CHEBI:15377"/>
        <dbReference type="ChEBI" id="CHEBI:15378"/>
        <dbReference type="ChEBI" id="CHEBI:30089"/>
        <dbReference type="ChEBI" id="CHEBI:57540"/>
        <dbReference type="ChEBI" id="CHEBI:57945"/>
        <dbReference type="EC" id="1.2.1.3"/>
    </reaction>
    <physiologicalReaction direction="left-to-right" evidence="6">
        <dbReference type="Rhea" id="RHEA:25295"/>
    </physiologicalReaction>
</comment>
<comment type="catalytic activity">
    <reaction evidence="6">
        <text>benzaldehyde + NAD(+) + H2O = benzoate + NADH + 2 H(+)</text>
        <dbReference type="Rhea" id="RHEA:11840"/>
        <dbReference type="ChEBI" id="CHEBI:15377"/>
        <dbReference type="ChEBI" id="CHEBI:15378"/>
        <dbReference type="ChEBI" id="CHEBI:16150"/>
        <dbReference type="ChEBI" id="CHEBI:17169"/>
        <dbReference type="ChEBI" id="CHEBI:57540"/>
        <dbReference type="ChEBI" id="CHEBI:57945"/>
        <dbReference type="EC" id="1.2.1.28"/>
    </reaction>
    <physiologicalReaction direction="left-to-right" evidence="6">
        <dbReference type="Rhea" id="RHEA:11841"/>
    </physiologicalReaction>
</comment>
<comment type="catalytic activity">
    <reaction evidence="6">
        <text>2-phenylacetaldehyde + NAD(+) + H2O = 2-phenylacetate + NADH + 2 H(+)</text>
        <dbReference type="Rhea" id="RHEA:21392"/>
        <dbReference type="ChEBI" id="CHEBI:15377"/>
        <dbReference type="ChEBI" id="CHEBI:15378"/>
        <dbReference type="ChEBI" id="CHEBI:16424"/>
        <dbReference type="ChEBI" id="CHEBI:18401"/>
        <dbReference type="ChEBI" id="CHEBI:57540"/>
        <dbReference type="ChEBI" id="CHEBI:57945"/>
        <dbReference type="EC" id="1.2.1.39"/>
    </reaction>
    <physiologicalReaction direction="left-to-right" evidence="6">
        <dbReference type="Rhea" id="RHEA:21393"/>
    </physiologicalReaction>
</comment>
<comment type="activity regulation">
    <text evidence="6">Inhibited by disulfiram.</text>
</comment>
<comment type="biophysicochemical properties">
    <kinetics>
        <KM evidence="6">1.37 uM for benzaldehyde</KM>
        <KM evidence="6">2.01 uM for acetaldehyde</KM>
        <KM evidence="6">5.35 uM for phenylacetaldehyde</KM>
        <Vmax evidence="6">1.32 nmol/sec/mg enzyme with benzaldehyde as substrate</Vmax>
        <Vmax evidence="6">8.93 nmol/sec/mg enzyme with acetaldehyde as substrate</Vmax>
        <Vmax evidence="6">1.0 nmol/sec/mg enzyme with phenylacetaldehyde as substrate</Vmax>
        <text evidence="6">kcat is 0.31 sec(-1) with benzaldehyde as substrate (PubMed:19292760). kcat is 2.08 sec(-1) with acetaldehyde as substrate (PubMed:19292760). kcat is 0.23 sec(-1) with phenylacetaldehyde as substrate (PubMed:19292760).</text>
    </kinetics>
    <phDependence>
        <text evidence="6">Optimum pH is 8. Active in a broad range of pH varying from 6 to 9.</text>
    </phDependence>
</comment>
<comment type="pathway">
    <text evidence="6">Aromatic compound metabolism.</text>
</comment>
<comment type="subunit">
    <text evidence="2">Homotetramer.</text>
</comment>
<comment type="subcellular location">
    <subcellularLocation>
        <location evidence="6">Mitochondrion</location>
    </subcellularLocation>
</comment>
<comment type="tissue specificity">
    <text evidence="6">Expressed predominantly in the upper and lower flower petal lobes, and, at low levels, in flower tubes, pistils, stamens and sepals.</text>
</comment>
<comment type="developmental stage">
    <text evidence="6">In corollas, accumulates progressively during flower development, from buds to anthesis, with a peak at flower opening, but fades out in senescing flowers.</text>
</comment>
<comment type="induction">
    <text evidence="6">Circadian-regulation with peak levels occurring from the late afternoon hours until early morning and lowest levels during the afternoon in flowers.</text>
</comment>
<comment type="similarity">
    <text evidence="8">Belongs to the aldehyde dehydrogenase family.</text>
</comment>
<protein>
    <recommendedName>
        <fullName evidence="7">Benzaldehyde dehydrogenase, mitochondrial</fullName>
        <ecNumber evidence="6">1.2.1.28</ecNumber>
    </recommendedName>
    <alternativeName>
        <fullName evidence="8">2-phenylacetaldehyde dehydrogenase</fullName>
        <ecNumber evidence="6">1.2.1.39</ecNumber>
    </alternativeName>
    <alternativeName>
        <fullName evidence="8">Acetaldehyde dehydrogenase</fullName>
        <ecNumber evidence="6">1.2.1.3</ecNumber>
    </alternativeName>
</protein>
<sequence>MAAHRFSSLLSRSVPLLSRGGKQSYLGRGVYRYGTAAAAALEEPIKPPVSVQYDKLLINGQFVDAASGKTFPTLDPRSGEVIAHVAEGDAEDINRAVAAARKAFDEGPWPKMPAYERQKIMLRFADLVEKHNDEVAALEAWDSGKPYEQCAQVEIPMFVRLFRYYAGWADKIHGLTIPADGPHHVQTLHEPIGVAGQIIPWNFPLVMFGWKVGPALACGNSVVLKTAEQTPLSALLVSKLFHEAGLPEGVLNIVSGFGPTAGAALCRHMDVDKLAFTGSTETGKIVLELSAKSNLKPVTLELGGKSPFIVCEDADVDKAVELAHFALFFNQGQCCCAGSRTFVHEKVYDEFVEKAKARALKRTVGDPFKAGMEQGPQVDADQFEKILKYIRSGAESGATLETGGDRLGTKGYYIQPTVFSDVKDDMLIAKDEIFGPVQTILKFKELDEVIRRANNSSYGLAAGVFTQNLDTANTMMRALRAGTVWINCFDTFDAAIPFGGYKMSGIGREKGEYSLKNYLQVKAVVTALKNPAWL</sequence>
<evidence type="ECO:0000250" key="1">
    <source>
        <dbReference type="UniProtKB" id="P00352"/>
    </source>
</evidence>
<evidence type="ECO:0000250" key="2">
    <source>
        <dbReference type="UniProtKB" id="P51977"/>
    </source>
</evidence>
<evidence type="ECO:0000255" key="3"/>
<evidence type="ECO:0000255" key="4">
    <source>
        <dbReference type="PROSITE-ProRule" id="PRU10007"/>
    </source>
</evidence>
<evidence type="ECO:0000255" key="5">
    <source>
        <dbReference type="PROSITE-ProRule" id="PRU10008"/>
    </source>
</evidence>
<evidence type="ECO:0000269" key="6">
    <source>
    </source>
</evidence>
<evidence type="ECO:0000303" key="7">
    <source>
    </source>
</evidence>
<evidence type="ECO:0000305" key="8"/>
<gene>
    <name evidence="7" type="primary">BALDH</name>
</gene>
<reference key="1">
    <citation type="journal article" date="2009" name="Plant J.">
        <title>Involvement of snapdragon benzaldehyde dehydrogenase in benzoic acid biosynthesis.</title>
        <authorList>
            <person name="Long M.C."/>
            <person name="Nagegowda D.A."/>
            <person name="Kaminaga Y."/>
            <person name="Ho K.K."/>
            <person name="Kish C.M."/>
            <person name="Schnepp J."/>
            <person name="Sherman D."/>
            <person name="Weiner H."/>
            <person name="Rhodes D."/>
            <person name="Dudareva N."/>
        </authorList>
    </citation>
    <scope>NUCLEOTIDE SEQUENCE [MRNA]</scope>
    <scope>FUNCTION</scope>
    <scope>CATALYTIC ACTIVITY</scope>
    <scope>SUBCELLULAR LOCATION</scope>
    <scope>TISSUE SPECIFICITY</scope>
    <scope>DEVELOPMENTAL STAGE</scope>
    <scope>INDUCTION</scope>
    <scope>BIOPHYSICOCHEMICAL PROPERTIES</scope>
    <scope>ACTIVITY REGULATION</scope>
    <scope>PATHWAY</scope>
    <source>
        <strain>cv. Maryland True Pink</strain>
        <tissue>Petal</tissue>
    </source>
</reference>
<proteinExistence type="evidence at protein level"/>
<feature type="transit peptide" description="Mitochondrion" evidence="3">
    <location>
        <begin position="1"/>
        <end position="29"/>
    </location>
</feature>
<feature type="chain" id="PRO_0000451519" description="Benzaldehyde dehydrogenase, mitochondrial">
    <location>
        <begin position="30"/>
        <end position="534"/>
    </location>
</feature>
<feature type="active site" description="Proton acceptor" evidence="4 5">
    <location>
        <position position="301"/>
    </location>
</feature>
<feature type="active site" description="Nucleophile" evidence="2">
    <location>
        <position position="335"/>
    </location>
</feature>
<feature type="binding site" evidence="2">
    <location>
        <begin position="199"/>
        <end position="202"/>
    </location>
    <ligand>
        <name>NAD(+)</name>
        <dbReference type="ChEBI" id="CHEBI:57540"/>
    </ligand>
</feature>
<feature type="binding site" evidence="2">
    <location>
        <begin position="225"/>
        <end position="228"/>
    </location>
    <ligand>
        <name>NAD(+)</name>
        <dbReference type="ChEBI" id="CHEBI:57540"/>
    </ligand>
</feature>
<feature type="binding site" evidence="2">
    <location>
        <begin position="258"/>
        <end position="259"/>
    </location>
    <ligand>
        <name>NAD(+)</name>
        <dbReference type="ChEBI" id="CHEBI:57540"/>
    </ligand>
</feature>
<feature type="binding site" evidence="2">
    <location>
        <begin position="278"/>
        <end position="279"/>
    </location>
    <ligand>
        <name>NAD(+)</name>
        <dbReference type="ChEBI" id="CHEBI:57540"/>
    </ligand>
</feature>
<feature type="binding site" evidence="1">
    <location>
        <begin position="301"/>
        <end position="303"/>
    </location>
    <ligand>
        <name>NAD(+)</name>
        <dbReference type="ChEBI" id="CHEBI:57540"/>
    </ligand>
</feature>
<feature type="binding site" evidence="1">
    <location>
        <begin position="381"/>
        <end position="385"/>
    </location>
    <ligand>
        <name>NAD(+)</name>
        <dbReference type="ChEBI" id="CHEBI:57540"/>
    </ligand>
</feature>
<feature type="binding site" evidence="2">
    <location>
        <begin position="432"/>
        <end position="434"/>
    </location>
    <ligand>
        <name>NAD(+)</name>
        <dbReference type="ChEBI" id="CHEBI:57540"/>
    </ligand>
</feature>
<feature type="site" description="Transition state stabilizer" evidence="2">
    <location>
        <position position="202"/>
    </location>
</feature>
<keyword id="KW-0496">Mitochondrion</keyword>
<keyword id="KW-0520">NAD</keyword>
<keyword id="KW-0560">Oxidoreductase</keyword>
<keyword id="KW-0809">Transit peptide</keyword>
<dbReference type="EC" id="1.2.1.28" evidence="6"/>
<dbReference type="EC" id="1.2.1.39" evidence="6"/>
<dbReference type="EC" id="1.2.1.3" evidence="6"/>
<dbReference type="EMBL" id="FJ151199">
    <property type="protein sequence ID" value="ACM89738.1"/>
    <property type="molecule type" value="mRNA"/>
</dbReference>
<dbReference type="SMR" id="C7A2A0"/>
<dbReference type="GO" id="GO:0005739">
    <property type="term" value="C:mitochondrion"/>
    <property type="evidence" value="ECO:0000314"/>
    <property type="project" value="UniProtKB"/>
</dbReference>
<dbReference type="GO" id="GO:0008774">
    <property type="term" value="F:acetaldehyde dehydrogenase (acetylating) activity"/>
    <property type="evidence" value="ECO:0000314"/>
    <property type="project" value="UniProtKB"/>
</dbReference>
<dbReference type="GO" id="GO:0140087">
    <property type="term" value="F:acetaldehyde dehydrogenase (NAD+) activity"/>
    <property type="evidence" value="ECO:0007669"/>
    <property type="project" value="RHEA"/>
</dbReference>
<dbReference type="GO" id="GO:0004029">
    <property type="term" value="F:aldehyde dehydrogenase (NAD+) activity"/>
    <property type="evidence" value="ECO:0000314"/>
    <property type="project" value="UniProtKB"/>
</dbReference>
<dbReference type="GO" id="GO:0018479">
    <property type="term" value="F:benzaldehyde dehydrogenase (NAD+) activity"/>
    <property type="evidence" value="ECO:0000314"/>
    <property type="project" value="UniProtKB"/>
</dbReference>
<dbReference type="GO" id="GO:0008957">
    <property type="term" value="F:phenylacetaldehyde dehydrogenase (NAD+) activity"/>
    <property type="evidence" value="ECO:0000314"/>
    <property type="project" value="UniProtKB"/>
</dbReference>
<dbReference type="GO" id="GO:0007623">
    <property type="term" value="P:circadian rhythm"/>
    <property type="evidence" value="ECO:0000270"/>
    <property type="project" value="UniProtKB"/>
</dbReference>
<dbReference type="GO" id="GO:0010597">
    <property type="term" value="P:green leaf volatile biosynthetic process"/>
    <property type="evidence" value="ECO:0000314"/>
    <property type="project" value="UniProtKB"/>
</dbReference>
<dbReference type="CDD" id="cd07142">
    <property type="entry name" value="ALDH_F2BC"/>
    <property type="match status" value="1"/>
</dbReference>
<dbReference type="FunFam" id="3.40.605.10:FF:000011">
    <property type="entry name" value="ALD5p Mitochondrial aldehyde dehydrogenase"/>
    <property type="match status" value="1"/>
</dbReference>
<dbReference type="FunFam" id="3.40.605.10:FF:000026">
    <property type="entry name" value="Aldehyde dehydrogenase, putative"/>
    <property type="match status" value="1"/>
</dbReference>
<dbReference type="FunFam" id="3.40.309.10:FF:000001">
    <property type="entry name" value="Mitochondrial aldehyde dehydrogenase 2"/>
    <property type="match status" value="1"/>
</dbReference>
<dbReference type="Gene3D" id="3.40.605.10">
    <property type="entry name" value="Aldehyde Dehydrogenase, Chain A, domain 1"/>
    <property type="match status" value="1"/>
</dbReference>
<dbReference type="Gene3D" id="3.40.309.10">
    <property type="entry name" value="Aldehyde Dehydrogenase, Chain A, domain 2"/>
    <property type="match status" value="1"/>
</dbReference>
<dbReference type="InterPro" id="IPR016161">
    <property type="entry name" value="Ald_DH/histidinol_DH"/>
</dbReference>
<dbReference type="InterPro" id="IPR016163">
    <property type="entry name" value="Ald_DH_C"/>
</dbReference>
<dbReference type="InterPro" id="IPR016160">
    <property type="entry name" value="Ald_DH_CS_CYS"/>
</dbReference>
<dbReference type="InterPro" id="IPR029510">
    <property type="entry name" value="Ald_DH_CS_GLU"/>
</dbReference>
<dbReference type="InterPro" id="IPR016162">
    <property type="entry name" value="Ald_DH_N"/>
</dbReference>
<dbReference type="InterPro" id="IPR015590">
    <property type="entry name" value="Aldehyde_DH_dom"/>
</dbReference>
<dbReference type="PANTHER" id="PTHR11699">
    <property type="entry name" value="ALDEHYDE DEHYDROGENASE-RELATED"/>
    <property type="match status" value="1"/>
</dbReference>
<dbReference type="Pfam" id="PF00171">
    <property type="entry name" value="Aldedh"/>
    <property type="match status" value="1"/>
</dbReference>
<dbReference type="SUPFAM" id="SSF53720">
    <property type="entry name" value="ALDH-like"/>
    <property type="match status" value="1"/>
</dbReference>
<dbReference type="PROSITE" id="PS00070">
    <property type="entry name" value="ALDEHYDE_DEHYDR_CYS"/>
    <property type="match status" value="1"/>
</dbReference>
<dbReference type="PROSITE" id="PS00687">
    <property type="entry name" value="ALDEHYDE_DEHYDR_GLU"/>
    <property type="match status" value="1"/>
</dbReference>
<organism>
    <name type="scientific">Antirrhinum majus</name>
    <name type="common">Garden snapdragon</name>
    <dbReference type="NCBI Taxonomy" id="4151"/>
    <lineage>
        <taxon>Eukaryota</taxon>
        <taxon>Viridiplantae</taxon>
        <taxon>Streptophyta</taxon>
        <taxon>Embryophyta</taxon>
        <taxon>Tracheophyta</taxon>
        <taxon>Spermatophyta</taxon>
        <taxon>Magnoliopsida</taxon>
        <taxon>eudicotyledons</taxon>
        <taxon>Gunneridae</taxon>
        <taxon>Pentapetalae</taxon>
        <taxon>asterids</taxon>
        <taxon>lamiids</taxon>
        <taxon>Lamiales</taxon>
        <taxon>Plantaginaceae</taxon>
        <taxon>Antirrhineae</taxon>
        <taxon>Antirrhinum</taxon>
    </lineage>
</organism>
<accession>C7A2A0</accession>
<name>BALDH_ANTMA</name>